<evidence type="ECO:0000255" key="1">
    <source>
        <dbReference type="HAMAP-Rule" id="MF_03124"/>
    </source>
</evidence>
<evidence type="ECO:0000256" key="2">
    <source>
        <dbReference type="SAM" id="MobiDB-lite"/>
    </source>
</evidence>
<gene>
    <name type="ORF">MGL_3505</name>
</gene>
<protein>
    <recommendedName>
        <fullName evidence="1">Arginine biosynthesis bifunctional protein ArgJ, mitochondrial</fullName>
    </recommendedName>
    <domain>
        <recommendedName>
            <fullName evidence="1">Glutamate N-acetyltransferase</fullName>
            <shortName evidence="1">GAT</shortName>
            <ecNumber evidence="1">2.3.1.35</ecNumber>
        </recommendedName>
        <alternativeName>
            <fullName evidence="1">Ornithine acetyltransferase</fullName>
            <shortName evidence="1">OATase</shortName>
        </alternativeName>
        <alternativeName>
            <fullName evidence="1">Ornithine transacetylase</fullName>
        </alternativeName>
    </domain>
    <domain>
        <recommendedName>
            <fullName evidence="1">Amino-acid acetyltransferase</fullName>
            <ecNumber evidence="1">2.3.1.1</ecNumber>
        </recommendedName>
        <alternativeName>
            <fullName evidence="1">N-acetylglutamate synthase</fullName>
            <shortName evidence="1">AGS</shortName>
        </alternativeName>
    </domain>
    <component>
        <recommendedName>
            <fullName evidence="1">Arginine biosynthesis bifunctional protein ArgJ alpha chain</fullName>
        </recommendedName>
    </component>
    <component>
        <recommendedName>
            <fullName evidence="1">Arginine biosynthesis bifunctional protein ArgJ beta chain</fullName>
        </recommendedName>
    </component>
</protein>
<keyword id="KW-0012">Acyltransferase</keyword>
<keyword id="KW-0028">Amino-acid biosynthesis</keyword>
<keyword id="KW-0055">Arginine biosynthesis</keyword>
<keyword id="KW-0068">Autocatalytic cleavage</keyword>
<keyword id="KW-0496">Mitochondrion</keyword>
<keyword id="KW-0511">Multifunctional enzyme</keyword>
<keyword id="KW-1185">Reference proteome</keyword>
<keyword id="KW-0808">Transferase</keyword>
<dbReference type="EC" id="2.3.1.35" evidence="1"/>
<dbReference type="EC" id="2.3.1.1" evidence="1"/>
<dbReference type="EMBL" id="AAYY01000013">
    <property type="protein sequence ID" value="EDP42256.1"/>
    <property type="molecule type" value="Genomic_DNA"/>
</dbReference>
<dbReference type="RefSeq" id="XP_001729470.1">
    <property type="nucleotide sequence ID" value="XM_001729418.1"/>
</dbReference>
<dbReference type="SMR" id="A8Q9M0"/>
<dbReference type="FunCoup" id="A8Q9M0">
    <property type="interactions" value="144"/>
</dbReference>
<dbReference type="STRING" id="425265.A8Q9M0"/>
<dbReference type="MEROPS" id="T05.001"/>
<dbReference type="GeneID" id="5853777"/>
<dbReference type="KEGG" id="mgl:MGL_3505"/>
<dbReference type="VEuPathDB" id="FungiDB:MGL_3505"/>
<dbReference type="InParanoid" id="A8Q9M0"/>
<dbReference type="OMA" id="WGRIVMA"/>
<dbReference type="OrthoDB" id="2017946at2759"/>
<dbReference type="UniPathway" id="UPA00068">
    <property type="reaction ID" value="UER00106"/>
</dbReference>
<dbReference type="UniPathway" id="UPA00068">
    <property type="reaction ID" value="UER00111"/>
</dbReference>
<dbReference type="Proteomes" id="UP000008837">
    <property type="component" value="Unassembled WGS sequence"/>
</dbReference>
<dbReference type="GO" id="GO:0005759">
    <property type="term" value="C:mitochondrial matrix"/>
    <property type="evidence" value="ECO:0007669"/>
    <property type="project" value="UniProtKB-SubCell"/>
</dbReference>
<dbReference type="GO" id="GO:0004358">
    <property type="term" value="F:glutamate N-acetyltransferase activity"/>
    <property type="evidence" value="ECO:0007669"/>
    <property type="project" value="UniProtKB-UniRule"/>
</dbReference>
<dbReference type="GO" id="GO:0004042">
    <property type="term" value="F:L-glutamate N-acetyltransferase activity"/>
    <property type="evidence" value="ECO:0007669"/>
    <property type="project" value="UniProtKB-UniRule"/>
</dbReference>
<dbReference type="GO" id="GO:0006526">
    <property type="term" value="P:L-arginine biosynthetic process"/>
    <property type="evidence" value="ECO:0007669"/>
    <property type="project" value="UniProtKB-UniRule"/>
</dbReference>
<dbReference type="GO" id="GO:0006592">
    <property type="term" value="P:ornithine biosynthetic process"/>
    <property type="evidence" value="ECO:0007669"/>
    <property type="project" value="TreeGrafter"/>
</dbReference>
<dbReference type="CDD" id="cd02152">
    <property type="entry name" value="OAT"/>
    <property type="match status" value="1"/>
</dbReference>
<dbReference type="FunFam" id="3.10.20.340:FF:000002">
    <property type="entry name" value="Arginine biosynthesis bifunctional protein ArgJ, mitochondrial"/>
    <property type="match status" value="1"/>
</dbReference>
<dbReference type="FunFam" id="3.60.70.12:FF:000006">
    <property type="entry name" value="Arginine biosynthesis bifunctional protein ArgJ, mitochondrial"/>
    <property type="match status" value="1"/>
</dbReference>
<dbReference type="Gene3D" id="3.30.2330.10">
    <property type="entry name" value="arginine biosynthesis bifunctional protein suprefamily"/>
    <property type="match status" value="1"/>
</dbReference>
<dbReference type="Gene3D" id="3.10.20.340">
    <property type="entry name" value="ArgJ beta chain, C-terminal domain"/>
    <property type="match status" value="1"/>
</dbReference>
<dbReference type="Gene3D" id="3.60.70.12">
    <property type="entry name" value="L-amino peptidase D-ALA esterase/amidase"/>
    <property type="match status" value="1"/>
</dbReference>
<dbReference type="HAMAP" id="MF_01106">
    <property type="entry name" value="ArgJ"/>
    <property type="match status" value="1"/>
</dbReference>
<dbReference type="InterPro" id="IPR002813">
    <property type="entry name" value="Arg_biosynth_ArgJ"/>
</dbReference>
<dbReference type="InterPro" id="IPR016117">
    <property type="entry name" value="ArgJ-like_dom_sf"/>
</dbReference>
<dbReference type="InterPro" id="IPR042195">
    <property type="entry name" value="ArgJ_beta_C"/>
</dbReference>
<dbReference type="NCBIfam" id="TIGR00120">
    <property type="entry name" value="ArgJ"/>
    <property type="match status" value="1"/>
</dbReference>
<dbReference type="NCBIfam" id="NF003802">
    <property type="entry name" value="PRK05388.1"/>
    <property type="match status" value="1"/>
</dbReference>
<dbReference type="PANTHER" id="PTHR23100">
    <property type="entry name" value="ARGININE BIOSYNTHESIS BIFUNCTIONAL PROTEIN ARGJ"/>
    <property type="match status" value="1"/>
</dbReference>
<dbReference type="PANTHER" id="PTHR23100:SF0">
    <property type="entry name" value="ARGININE BIOSYNTHESIS BIFUNCTIONAL PROTEIN ARGJ, MITOCHONDRIAL"/>
    <property type="match status" value="1"/>
</dbReference>
<dbReference type="Pfam" id="PF01960">
    <property type="entry name" value="ArgJ"/>
    <property type="match status" value="1"/>
</dbReference>
<dbReference type="SUPFAM" id="SSF56266">
    <property type="entry name" value="DmpA/ArgJ-like"/>
    <property type="match status" value="1"/>
</dbReference>
<sequence>MWYRTFRTLGYTICRPYATCATKAERFVKTIDPSTLPRGYLVSSTYAGIKNAIRPVTSTNEPSAATTNVPHPQEAPKPDVALIVSSVPAAIAGTFTTNVFKAAPVVHATTALKAAGPNARVRAILTNSGCANAVTGQQGLEDTQTLVNRVQALLSPRNQNAIPTYEQDARSSSTDVLMMSTGVIGVRLPVAHIQRCLEHLAAPSILQSHPDAWLEAARAYMTTDTFPKIRTRQFILGNRRCSIVGIDKGAGMIHPRMTRSGGQLHATLLGVFATDAPISSATLQRCLDEAVRVSFNCISVDGDMSTNDTILALANGQAPFVDLDCTDTPNEWTETEHPDMVNKFAEELKSLCIEMSHLIVRDGEGAEKFVQVHVRNAGTYEQAHAIASSISTSALVKCAMHGEDANWGRILCSAGYASLPASTPAWTLDPSKVNVTFLPPPHQPDDLAPLPTLVNGVPQAVNETQAKKLLSYEDIYVDVDLQGGSWGSQGRSEATYWTCDFSKEYITVRW</sequence>
<proteinExistence type="inferred from homology"/>
<organism>
    <name type="scientific">Malassezia globosa (strain ATCC MYA-4612 / CBS 7966)</name>
    <name type="common">Dandruff-associated fungus</name>
    <dbReference type="NCBI Taxonomy" id="425265"/>
    <lineage>
        <taxon>Eukaryota</taxon>
        <taxon>Fungi</taxon>
        <taxon>Dikarya</taxon>
        <taxon>Basidiomycota</taxon>
        <taxon>Ustilaginomycotina</taxon>
        <taxon>Malasseziomycetes</taxon>
        <taxon>Malasseziales</taxon>
        <taxon>Malasseziaceae</taxon>
        <taxon>Malassezia</taxon>
    </lineage>
</organism>
<accession>A8Q9M0</accession>
<name>ARGJ_MALGO</name>
<comment type="function">
    <text evidence="1">Catalyzes two activities which are involved in the cyclic version of arginine biosynthesis: the synthesis of acetylglutamate from glutamate and acetyl-CoA, and of ornithine by transacetylation between acetylornithine and glutamate.</text>
</comment>
<comment type="catalytic activity">
    <reaction evidence="1">
        <text>N(2)-acetyl-L-ornithine + L-glutamate = N-acetyl-L-glutamate + L-ornithine</text>
        <dbReference type="Rhea" id="RHEA:15349"/>
        <dbReference type="ChEBI" id="CHEBI:29985"/>
        <dbReference type="ChEBI" id="CHEBI:44337"/>
        <dbReference type="ChEBI" id="CHEBI:46911"/>
        <dbReference type="ChEBI" id="CHEBI:57805"/>
        <dbReference type="EC" id="2.3.1.35"/>
    </reaction>
</comment>
<comment type="catalytic activity">
    <reaction evidence="1">
        <text>L-glutamate + acetyl-CoA = N-acetyl-L-glutamate + CoA + H(+)</text>
        <dbReference type="Rhea" id="RHEA:24292"/>
        <dbReference type="ChEBI" id="CHEBI:15378"/>
        <dbReference type="ChEBI" id="CHEBI:29985"/>
        <dbReference type="ChEBI" id="CHEBI:44337"/>
        <dbReference type="ChEBI" id="CHEBI:57287"/>
        <dbReference type="ChEBI" id="CHEBI:57288"/>
        <dbReference type="EC" id="2.3.1.1"/>
    </reaction>
</comment>
<comment type="pathway">
    <text evidence="1">Amino-acid biosynthesis; L-arginine biosynthesis; L-ornithine and N-acetyl-L-glutamate from L-glutamate and N(2)-acetyl-L-ornithine (cyclic): step 1/1.</text>
</comment>
<comment type="pathway">
    <text evidence="1">Amino-acid biosynthesis; L-arginine biosynthesis; N(2)-acetyl-L-ornithine from L-glutamate: step 1/4.</text>
</comment>
<comment type="subunit">
    <text evidence="1">Heterodimer of an alpha and a beta chain.</text>
</comment>
<comment type="subcellular location">
    <subcellularLocation>
        <location evidence="1">Mitochondrion matrix</location>
    </subcellularLocation>
</comment>
<comment type="PTM">
    <text evidence="1">The alpha and beta chains are autoproteolytically processed from a single precursor protein within the mitochondrion.</text>
</comment>
<comment type="miscellaneous">
    <text evidence="1">This protein may be expected to contain an N-terminal transit peptide but none has been predicted.</text>
</comment>
<comment type="similarity">
    <text evidence="1">Belongs to the ArgJ family.</text>
</comment>
<reference key="1">
    <citation type="journal article" date="2007" name="Proc. Natl. Acad. Sci. U.S.A.">
        <title>Dandruff-associated Malassezia genomes reveal convergent and divergent virulence traits shared with plant and human fungal pathogens.</title>
        <authorList>
            <person name="Xu J."/>
            <person name="Saunders C.W."/>
            <person name="Hu P."/>
            <person name="Grant R.A."/>
            <person name="Boekhout T."/>
            <person name="Kuramae E.E."/>
            <person name="Kronstad J.W."/>
            <person name="DeAngelis Y.M."/>
            <person name="Reeder N.L."/>
            <person name="Johnstone K.R."/>
            <person name="Leland M."/>
            <person name="Fieno A.M."/>
            <person name="Begley W.M."/>
            <person name="Sun Y."/>
            <person name="Lacey M.P."/>
            <person name="Chaudhary T."/>
            <person name="Keough T."/>
            <person name="Chu L."/>
            <person name="Sears R."/>
            <person name="Yuan B."/>
            <person name="Dawson T.L. Jr."/>
        </authorList>
    </citation>
    <scope>NUCLEOTIDE SEQUENCE [LARGE SCALE GENOMIC DNA]</scope>
    <source>
        <strain>ATCC MYA-4612 / CBS 7966</strain>
    </source>
</reference>
<feature type="chain" id="PRO_0000398064" description="Arginine biosynthesis bifunctional protein ArgJ alpha chain" evidence="1">
    <location>
        <begin position="1"/>
        <end position="266"/>
    </location>
</feature>
<feature type="chain" id="PRO_0000398065" description="Arginine biosynthesis bifunctional protein ArgJ beta chain" evidence="1">
    <location>
        <begin position="267"/>
        <end position="510"/>
    </location>
</feature>
<feature type="region of interest" description="Disordered" evidence="2">
    <location>
        <begin position="57"/>
        <end position="76"/>
    </location>
</feature>
<feature type="compositionally biased region" description="Polar residues" evidence="2">
    <location>
        <begin position="57"/>
        <end position="70"/>
    </location>
</feature>
<feature type="active site" description="Nucleophile" evidence="1">
    <location>
        <position position="267"/>
    </location>
</feature>
<feature type="binding site" evidence="1">
    <location>
        <position position="222"/>
    </location>
    <ligand>
        <name>substrate</name>
    </ligand>
</feature>
<feature type="binding site" evidence="1">
    <location>
        <position position="248"/>
    </location>
    <ligand>
        <name>substrate</name>
    </ligand>
</feature>
<feature type="binding site" evidence="1">
    <location>
        <position position="267"/>
    </location>
    <ligand>
        <name>substrate</name>
    </ligand>
</feature>
<feature type="binding site" evidence="1">
    <location>
        <position position="364"/>
    </location>
    <ligand>
        <name>substrate</name>
    </ligand>
</feature>
<feature type="site" description="Involved in the stabilization of negative charge on the oxyanion by the formation of the oxyanion hole" evidence="1">
    <location>
        <position position="181"/>
    </location>
</feature>
<feature type="site" description="Involved in the stabilization of negative charge on the oxyanion by the formation of the oxyanion hole" evidence="1">
    <location>
        <position position="182"/>
    </location>
</feature>
<feature type="site" description="Cleavage; by autolysis" evidence="1">
    <location>
        <begin position="266"/>
        <end position="267"/>
    </location>
</feature>